<organism>
    <name type="scientific">Cryptomeria japonica</name>
    <name type="common">Japanese cedar</name>
    <name type="synonym">Cupressus japonica</name>
    <dbReference type="NCBI Taxonomy" id="3369"/>
    <lineage>
        <taxon>Eukaryota</taxon>
        <taxon>Viridiplantae</taxon>
        <taxon>Streptophyta</taxon>
        <taxon>Embryophyta</taxon>
        <taxon>Tracheophyta</taxon>
        <taxon>Spermatophyta</taxon>
        <taxon>Pinopsida</taxon>
        <taxon>Pinidae</taxon>
        <taxon>Conifers II</taxon>
        <taxon>Cupressales</taxon>
        <taxon>Cupressaceae</taxon>
        <taxon>Cryptomeria</taxon>
    </lineage>
</organism>
<reference key="1">
    <citation type="journal article" date="2008" name="BMC Plant Biol.">
        <title>Complete nucleotide sequence of the Cryptomeria japonica D. Don. chloroplast genome and comparative chloroplast genomics: diversified genomic structure of coniferous species.</title>
        <authorList>
            <person name="Hirao T."/>
            <person name="Watanabe A."/>
            <person name="Kurita M."/>
            <person name="Kondo T."/>
            <person name="Takata K."/>
        </authorList>
    </citation>
    <scope>NUCLEOTIDE SEQUENCE [LARGE SCALE GENOMIC DNA]</scope>
</reference>
<comment type="function">
    <text evidence="1">One of the components of the core complex of photosystem II (PSII). PSII is a light-driven water:plastoquinone oxidoreductase that uses light energy to abstract electrons from H(2)O, generating O(2) and a proton gradient subsequently used for ATP formation. It consists of a core antenna complex that captures photons, and an electron transfer chain that converts photonic excitation into a charge separation. This subunit is found at the monomer-monomer interface and is required for correct PSII assembly and/or dimerization.</text>
</comment>
<comment type="subunit">
    <text evidence="1">PSII is composed of 1 copy each of membrane proteins PsbA, PsbB, PsbC, PsbD, PsbE, PsbF, PsbH, PsbI, PsbJ, PsbK, PsbL, PsbM, PsbT, PsbX, PsbY, PsbZ, Psb30/Ycf12, at least 3 peripheral proteins of the oxygen-evolving complex and a large number of cofactors. It forms dimeric complexes.</text>
</comment>
<comment type="subcellular location">
    <subcellularLocation>
        <location evidence="1">Plastid</location>
        <location evidence="1">Chloroplast thylakoid membrane</location>
        <topology evidence="1">Single-pass membrane protein</topology>
    </subcellularLocation>
</comment>
<comment type="similarity">
    <text evidence="1">Belongs to the PsbL family.</text>
</comment>
<dbReference type="EMBL" id="AP009377">
    <property type="protein sequence ID" value="BAG16659.1"/>
    <property type="molecule type" value="Genomic_DNA"/>
</dbReference>
<dbReference type="RefSeq" id="YP_001806661.1">
    <property type="nucleotide sequence ID" value="NC_010548.1"/>
</dbReference>
<dbReference type="SMR" id="B1VKE8"/>
<dbReference type="GeneID" id="6166601"/>
<dbReference type="KEGG" id="cjf:6166601"/>
<dbReference type="OrthoDB" id="99at2759"/>
<dbReference type="GO" id="GO:0009535">
    <property type="term" value="C:chloroplast thylakoid membrane"/>
    <property type="evidence" value="ECO:0007669"/>
    <property type="project" value="UniProtKB-SubCell"/>
</dbReference>
<dbReference type="GO" id="GO:0009539">
    <property type="term" value="C:photosystem II reaction center"/>
    <property type="evidence" value="ECO:0007669"/>
    <property type="project" value="InterPro"/>
</dbReference>
<dbReference type="GO" id="GO:0015979">
    <property type="term" value="P:photosynthesis"/>
    <property type="evidence" value="ECO:0007669"/>
    <property type="project" value="UniProtKB-UniRule"/>
</dbReference>
<dbReference type="HAMAP" id="MF_01317">
    <property type="entry name" value="PSII_PsbL"/>
    <property type="match status" value="1"/>
</dbReference>
<dbReference type="InterPro" id="IPR003372">
    <property type="entry name" value="PSII_PsbL"/>
</dbReference>
<dbReference type="InterPro" id="IPR037266">
    <property type="entry name" value="PSII_PsbL_sf"/>
</dbReference>
<dbReference type="NCBIfam" id="NF001972">
    <property type="entry name" value="PRK00753.1"/>
    <property type="match status" value="1"/>
</dbReference>
<dbReference type="Pfam" id="PF02419">
    <property type="entry name" value="PsbL"/>
    <property type="match status" value="1"/>
</dbReference>
<dbReference type="SUPFAM" id="SSF161017">
    <property type="entry name" value="Photosystem II reaction center protein L, PsbL"/>
    <property type="match status" value="1"/>
</dbReference>
<accession>B1VKE8</accession>
<protein>
    <recommendedName>
        <fullName evidence="1">Photosystem II reaction center protein L</fullName>
        <shortName evidence="1">PSII-L</shortName>
    </recommendedName>
</protein>
<sequence length="38" mass="4497">MTQSNPNEQNVELNRTSLYWGLLLIFVLAVLFSNYFFN</sequence>
<keyword id="KW-0150">Chloroplast</keyword>
<keyword id="KW-0472">Membrane</keyword>
<keyword id="KW-0602">Photosynthesis</keyword>
<keyword id="KW-0604">Photosystem II</keyword>
<keyword id="KW-0934">Plastid</keyword>
<keyword id="KW-0674">Reaction center</keyword>
<keyword id="KW-0793">Thylakoid</keyword>
<keyword id="KW-0812">Transmembrane</keyword>
<keyword id="KW-1133">Transmembrane helix</keyword>
<name>PSBL_CRYJA</name>
<geneLocation type="chloroplast"/>
<evidence type="ECO:0000255" key="1">
    <source>
        <dbReference type="HAMAP-Rule" id="MF_01317"/>
    </source>
</evidence>
<feature type="chain" id="PRO_0000353253" description="Photosystem II reaction center protein L">
    <location>
        <begin position="1"/>
        <end position="38"/>
    </location>
</feature>
<feature type="transmembrane region" description="Helical" evidence="1">
    <location>
        <begin position="17"/>
        <end position="37"/>
    </location>
</feature>
<gene>
    <name evidence="1" type="primary">psbL</name>
</gene>
<proteinExistence type="inferred from homology"/>